<evidence type="ECO:0000255" key="1">
    <source>
        <dbReference type="HAMAP-Rule" id="MF_00313"/>
    </source>
</evidence>
<sequence length="317" mass="32443">MSSSSDAIKAALEKGRAAGLSATGGKNADYIPFLASVPSDLFGLAVVTADGQTFKTGDADFAFAIESISKVFTLALVMEEIGPDSVREKVGADPTGLPFNSVIALELHNGKSLSPLVNAGAIATASLVPGDTADARWNNILECQCGFAGRRLKLSNEVNQSEQTTNFHNRAIAWLLYSAGTCYSDPMEAVDIYTRQCSTLVTATDLATMGATLAAGGVNPISGKRMVSAGNVAPILAEMTMEGLYTASGDWAYTVGLPGKSGVGGGIMAVVPGELAIAAFSPPLDPAGNSVKAMAAVAAVADSLGHNLYTTRGKVSS</sequence>
<proteinExistence type="inferred from homology"/>
<gene>
    <name evidence="1" type="primary">glsA</name>
    <name type="ordered locus">BCAN_B0342</name>
</gene>
<reference key="1">
    <citation type="submission" date="2007-10" db="EMBL/GenBank/DDBJ databases">
        <title>Brucella canis ATCC 23365 whole genome shotgun sequencing project.</title>
        <authorList>
            <person name="Setubal J.C."/>
            <person name="Bowns C."/>
            <person name="Boyle S."/>
            <person name="Crasta O.R."/>
            <person name="Czar M.J."/>
            <person name="Dharmanolla C."/>
            <person name="Gillespie J.J."/>
            <person name="Kenyon R.W."/>
            <person name="Lu J."/>
            <person name="Mane S."/>
            <person name="Mohapatra S."/>
            <person name="Nagrani S."/>
            <person name="Purkayastha A."/>
            <person name="Rajasimha H.K."/>
            <person name="Shallom J.M."/>
            <person name="Shallom S."/>
            <person name="Shukla M."/>
            <person name="Snyder E.E."/>
            <person name="Sobral B.W."/>
            <person name="Wattam A.R."/>
            <person name="Will R."/>
            <person name="Williams K."/>
            <person name="Yoo H."/>
            <person name="Bruce D."/>
            <person name="Detter C."/>
            <person name="Munk C."/>
            <person name="Brettin T.S."/>
        </authorList>
    </citation>
    <scope>NUCLEOTIDE SEQUENCE [LARGE SCALE GENOMIC DNA]</scope>
    <source>
        <strain>ATCC 23365 / NCTC 10854 / RM-666</strain>
    </source>
</reference>
<organism>
    <name type="scientific">Brucella canis (strain ATCC 23365 / NCTC 10854 / RM-666)</name>
    <dbReference type="NCBI Taxonomy" id="483179"/>
    <lineage>
        <taxon>Bacteria</taxon>
        <taxon>Pseudomonadati</taxon>
        <taxon>Pseudomonadota</taxon>
        <taxon>Alphaproteobacteria</taxon>
        <taxon>Hyphomicrobiales</taxon>
        <taxon>Brucellaceae</taxon>
        <taxon>Brucella/Ochrobactrum group</taxon>
        <taxon>Brucella</taxon>
    </lineage>
</organism>
<dbReference type="EC" id="3.5.1.2" evidence="1"/>
<dbReference type="EMBL" id="CP000873">
    <property type="protein sequence ID" value="ABX63526.1"/>
    <property type="molecule type" value="Genomic_DNA"/>
</dbReference>
<dbReference type="RefSeq" id="WP_004687431.1">
    <property type="nucleotide sequence ID" value="NC_010104.1"/>
</dbReference>
<dbReference type="SMR" id="A9ME88"/>
<dbReference type="GeneID" id="97535500"/>
<dbReference type="KEGG" id="bcs:BCAN_B0342"/>
<dbReference type="HOGENOM" id="CLU_027932_1_0_5"/>
<dbReference type="PhylomeDB" id="A9ME88"/>
<dbReference type="Proteomes" id="UP000001385">
    <property type="component" value="Chromosome II"/>
</dbReference>
<dbReference type="GO" id="GO:0004359">
    <property type="term" value="F:glutaminase activity"/>
    <property type="evidence" value="ECO:0007669"/>
    <property type="project" value="UniProtKB-UniRule"/>
</dbReference>
<dbReference type="GO" id="GO:0006537">
    <property type="term" value="P:glutamate biosynthetic process"/>
    <property type="evidence" value="ECO:0007669"/>
    <property type="project" value="TreeGrafter"/>
</dbReference>
<dbReference type="GO" id="GO:0006543">
    <property type="term" value="P:glutamine catabolic process"/>
    <property type="evidence" value="ECO:0007669"/>
    <property type="project" value="TreeGrafter"/>
</dbReference>
<dbReference type="Gene3D" id="3.40.710.10">
    <property type="entry name" value="DD-peptidase/beta-lactamase superfamily"/>
    <property type="match status" value="1"/>
</dbReference>
<dbReference type="HAMAP" id="MF_00313">
    <property type="entry name" value="Glutaminase"/>
    <property type="match status" value="1"/>
</dbReference>
<dbReference type="InterPro" id="IPR012338">
    <property type="entry name" value="Beta-lactam/transpept-like"/>
</dbReference>
<dbReference type="InterPro" id="IPR015868">
    <property type="entry name" value="Glutaminase"/>
</dbReference>
<dbReference type="NCBIfam" id="TIGR03814">
    <property type="entry name" value="Gln_ase"/>
    <property type="match status" value="1"/>
</dbReference>
<dbReference type="NCBIfam" id="NF009020">
    <property type="entry name" value="PRK12356.1"/>
    <property type="match status" value="1"/>
</dbReference>
<dbReference type="PANTHER" id="PTHR12544">
    <property type="entry name" value="GLUTAMINASE"/>
    <property type="match status" value="1"/>
</dbReference>
<dbReference type="PANTHER" id="PTHR12544:SF48">
    <property type="entry name" value="GLUTAMINASE 1"/>
    <property type="match status" value="1"/>
</dbReference>
<dbReference type="Pfam" id="PF04960">
    <property type="entry name" value="Glutaminase"/>
    <property type="match status" value="1"/>
</dbReference>
<dbReference type="SUPFAM" id="SSF56601">
    <property type="entry name" value="beta-lactamase/transpeptidase-like"/>
    <property type="match status" value="1"/>
</dbReference>
<keyword id="KW-0378">Hydrolase</keyword>
<keyword id="KW-1185">Reference proteome</keyword>
<protein>
    <recommendedName>
        <fullName evidence="1">Glutaminase</fullName>
        <ecNumber evidence="1">3.5.1.2</ecNumber>
    </recommendedName>
</protein>
<accession>A9ME88</accession>
<name>GLSA_BRUC2</name>
<feature type="chain" id="PRO_1000079071" description="Glutaminase">
    <location>
        <begin position="1"/>
        <end position="317"/>
    </location>
</feature>
<feature type="binding site" evidence="1">
    <location>
        <position position="67"/>
    </location>
    <ligand>
        <name>substrate</name>
    </ligand>
</feature>
<feature type="binding site" evidence="1">
    <location>
        <position position="118"/>
    </location>
    <ligand>
        <name>substrate</name>
    </ligand>
</feature>
<feature type="binding site" evidence="1">
    <location>
        <position position="162"/>
    </location>
    <ligand>
        <name>substrate</name>
    </ligand>
</feature>
<feature type="binding site" evidence="1">
    <location>
        <position position="169"/>
    </location>
    <ligand>
        <name>substrate</name>
    </ligand>
</feature>
<feature type="binding site" evidence="1">
    <location>
        <position position="193"/>
    </location>
    <ligand>
        <name>substrate</name>
    </ligand>
</feature>
<feature type="binding site" evidence="1">
    <location>
        <position position="245"/>
    </location>
    <ligand>
        <name>substrate</name>
    </ligand>
</feature>
<feature type="binding site" evidence="1">
    <location>
        <position position="263"/>
    </location>
    <ligand>
        <name>substrate</name>
    </ligand>
</feature>
<comment type="catalytic activity">
    <reaction evidence="1">
        <text>L-glutamine + H2O = L-glutamate + NH4(+)</text>
        <dbReference type="Rhea" id="RHEA:15889"/>
        <dbReference type="ChEBI" id="CHEBI:15377"/>
        <dbReference type="ChEBI" id="CHEBI:28938"/>
        <dbReference type="ChEBI" id="CHEBI:29985"/>
        <dbReference type="ChEBI" id="CHEBI:58359"/>
        <dbReference type="EC" id="3.5.1.2"/>
    </reaction>
</comment>
<comment type="subunit">
    <text evidence="1">Homotetramer.</text>
</comment>
<comment type="similarity">
    <text evidence="1">Belongs to the glutaminase family.</text>
</comment>